<reference key="1">
    <citation type="journal article" date="2010" name="J. Bacteriol.">
        <title>Complete genome sequence of the photosynthetic purple nonsulfur bacterium Rhodobacter capsulatus SB 1003.</title>
        <authorList>
            <person name="Strnad H."/>
            <person name="Lapidus A."/>
            <person name="Paces J."/>
            <person name="Ulbrich P."/>
            <person name="Vlcek C."/>
            <person name="Paces V."/>
            <person name="Haselkorn R."/>
        </authorList>
    </citation>
    <scope>NUCLEOTIDE SEQUENCE [LARGE SCALE GENOMIC DNA]</scope>
    <source>
        <strain>ATCC BAA-309 / NBRC 16581 / SB1003</strain>
    </source>
</reference>
<reference key="2">
    <citation type="journal article" date="2006" name="J. Bacteriol.">
        <title>Comparative and functional genomic analysis of prokaryotic nickel and cobalt uptake transporters: evidence for a novel group of ATP-binding cassette transporters.</title>
        <authorList>
            <person name="Rodionov D.A."/>
            <person name="Hebbeln P."/>
            <person name="Gelfand M.S."/>
            <person name="Eitinger T."/>
        </authorList>
    </citation>
    <scope>FUNCTION IN NICKEL TRANSPORT</scope>
    <scope>SUBSTRATES</scope>
    <scope>SUBUNIT</scope>
    <scope>EXPRESSION IN E.COLI</scope>
    <source>
        <strain>ATCC BAA-309 / NBRC 16581 / SB1003</strain>
    </source>
</reference>
<organism>
    <name type="scientific">Rhodobacter capsulatus (strain ATCC BAA-309 / NBRC 16581 / SB1003)</name>
    <dbReference type="NCBI Taxonomy" id="272942"/>
    <lineage>
        <taxon>Bacteria</taxon>
        <taxon>Pseudomonadati</taxon>
        <taxon>Pseudomonadota</taxon>
        <taxon>Alphaproteobacteria</taxon>
        <taxon>Rhodobacterales</taxon>
        <taxon>Rhodobacter group</taxon>
        <taxon>Rhodobacter</taxon>
    </lineage>
</organism>
<name>NIKMN_RHOCB</name>
<gene>
    <name type="primary">nikMN</name>
    <name type="ordered locus">RCAP_rcc01034</name>
</gene>
<proteinExistence type="evidence at protein level"/>
<keyword id="KW-0997">Cell inner membrane</keyword>
<keyword id="KW-1003">Cell membrane</keyword>
<keyword id="KW-0406">Ion transport</keyword>
<keyword id="KW-0472">Membrane</keyword>
<keyword id="KW-0533">Nickel</keyword>
<keyword id="KW-0921">Nickel transport</keyword>
<keyword id="KW-1185">Reference proteome</keyword>
<keyword id="KW-0812">Transmembrane</keyword>
<keyword id="KW-1133">Transmembrane helix</keyword>
<keyword id="KW-0813">Transport</keyword>
<evidence type="ECO:0000250" key="1"/>
<evidence type="ECO:0000255" key="2"/>
<evidence type="ECO:0000269" key="3">
    <source>
    </source>
</evidence>
<evidence type="ECO:0000305" key="4"/>
<sequence>MHIPDGYLSPVTCAVTFAATVPFWYVSMRKLDRDLNGQHLPLVALVAAFSFVIMMFNLPIPGGTTAHAAGIGIAAVLLGPWAAVPAISVALLIQAIFFGDGGITAFGANCLNMAVVGPMVAAAVYALGTRGAAIGSRRRVIMAGLASYAGLNAAALLAAVEFGVQPLFFHDAAGAPLYAPYPLSVAVPAMALTHLTIAGAAEFIVTAGLVAWLQRSNPELLAPRRAPAAPERHLRLWAGIGALVVLCPLGLIAAGTAWGEWGAEDFTSEAGRAAMAGASGGVAPPAGLPGGFARLAELWSAPLPDYAPAFVQNAPLGYVLSALLGVALIVAGIGLSAGLRALTRRAG</sequence>
<feature type="chain" id="PRO_0000411083" description="Fused nickel transport protein NikMN">
    <location>
        <begin position="1"/>
        <end position="347"/>
    </location>
</feature>
<feature type="transmembrane region" description="Helical" evidence="2">
    <location>
        <begin position="6"/>
        <end position="26"/>
    </location>
</feature>
<feature type="transmembrane region" description="Helical" evidence="2">
    <location>
        <begin position="40"/>
        <end position="60"/>
    </location>
</feature>
<feature type="transmembrane region" description="Helical" evidence="2">
    <location>
        <begin position="73"/>
        <end position="93"/>
    </location>
</feature>
<feature type="transmembrane region" description="Helical" evidence="2">
    <location>
        <begin position="96"/>
        <end position="116"/>
    </location>
</feature>
<feature type="transmembrane region" description="Helical" evidence="2">
    <location>
        <begin position="140"/>
        <end position="160"/>
    </location>
</feature>
<feature type="transmembrane region" description="Helical" evidence="2">
    <location>
        <begin position="185"/>
        <end position="205"/>
    </location>
</feature>
<feature type="transmembrane region" description="Helical" evidence="2">
    <location>
        <begin position="236"/>
        <end position="256"/>
    </location>
</feature>
<feature type="transmembrane region" description="Helical" evidence="2">
    <location>
        <begin position="273"/>
        <end position="293"/>
    </location>
</feature>
<feature type="transmembrane region" description="Helical" evidence="2">
    <location>
        <begin position="319"/>
        <end position="339"/>
    </location>
</feature>
<dbReference type="EMBL" id="CP001312">
    <property type="protein sequence ID" value="ADE84794.1"/>
    <property type="molecule type" value="Genomic_DNA"/>
</dbReference>
<dbReference type="SMR" id="D5AQY8"/>
<dbReference type="STRING" id="272942.RCAP_rcc01034"/>
<dbReference type="TCDB" id="3.A.1.23.7">
    <property type="family name" value="the atp-binding cassette (abc) superfamily"/>
</dbReference>
<dbReference type="GeneID" id="31489961"/>
<dbReference type="KEGG" id="rcp:RCAP_rcc01034"/>
<dbReference type="eggNOG" id="COG0310">
    <property type="taxonomic scope" value="Bacteria"/>
</dbReference>
<dbReference type="HOGENOM" id="CLU_052508_2_0_5"/>
<dbReference type="OrthoDB" id="9792317at2"/>
<dbReference type="Proteomes" id="UP000002361">
    <property type="component" value="Chromosome"/>
</dbReference>
<dbReference type="GO" id="GO:0043190">
    <property type="term" value="C:ATP-binding cassette (ABC) transporter complex"/>
    <property type="evidence" value="ECO:0000314"/>
    <property type="project" value="UniProtKB"/>
</dbReference>
<dbReference type="GO" id="GO:0015675">
    <property type="term" value="P:nickel cation transport"/>
    <property type="evidence" value="ECO:0000314"/>
    <property type="project" value="UniProtKB"/>
</dbReference>
<dbReference type="Gene3D" id="1.10.1760.20">
    <property type="match status" value="1"/>
</dbReference>
<dbReference type="InterPro" id="IPR002751">
    <property type="entry name" value="CbiM/NikMN"/>
</dbReference>
<dbReference type="InterPro" id="IPR025937">
    <property type="entry name" value="PDGLE_dom"/>
</dbReference>
<dbReference type="NCBIfam" id="NF008873">
    <property type="entry name" value="PRK11909.1"/>
    <property type="match status" value="1"/>
</dbReference>
<dbReference type="PANTHER" id="PTHR34229">
    <property type="entry name" value="METAL TRANSPORT PROTEIN HI_1621-RELATED"/>
    <property type="match status" value="1"/>
</dbReference>
<dbReference type="PANTHER" id="PTHR34229:SF1">
    <property type="entry name" value="METAL TRANSPORT PROTEIN HI_1621-RELATED"/>
    <property type="match status" value="1"/>
</dbReference>
<dbReference type="Pfam" id="PF01891">
    <property type="entry name" value="CbiM"/>
    <property type="match status" value="1"/>
</dbReference>
<dbReference type="Pfam" id="PF13190">
    <property type="entry name" value="PDGLE"/>
    <property type="match status" value="1"/>
</dbReference>
<accession>D5AQY8</accession>
<protein>
    <recommendedName>
        <fullName>Fused nickel transport protein NikMN</fullName>
    </recommendedName>
    <alternativeName>
        <fullName>Energy-coupling factor transporter probable substrate-capture protein NikMN</fullName>
        <shortName>ECF transporter S component NikMN</shortName>
    </alternativeName>
</protein>
<comment type="function">
    <text evidence="3">Part of the energy-coupling factor (ECF) transporter complex NikMNQO involved in nickel import. The complex confers nickel uptake upon expression in E.coli; can also transport cobalt with a very low affinity.</text>
</comment>
<comment type="subunit">
    <text evidence="1">Forms an energy-coupling factor (ECF) transporter complex composed of an ATP-binding protein (A component, NikO), a transmembrane protein (T component, NikQ) and a fused possible substrate-capture protein (S component, NikMN) of unknown stoichimetry.</text>
</comment>
<comment type="subcellular location">
    <subcellularLocation>
        <location evidence="4">Cell inner membrane</location>
        <topology evidence="4">Multi-pass membrane protein</topology>
    </subcellularLocation>
</comment>
<comment type="similarity">
    <text evidence="4">Belongs to the CbiM family. NikM subfamily.</text>
</comment>